<comment type="function">
    <text evidence="1">Part of a membrane-bound complex that couples electron transfer with translocation of ions across the membrane.</text>
</comment>
<comment type="cofactor">
    <cofactor evidence="1">
        <name>FMN</name>
        <dbReference type="ChEBI" id="CHEBI:58210"/>
    </cofactor>
</comment>
<comment type="subunit">
    <text evidence="1">The complex is composed of six subunits: RnfA, RnfB, RnfC, RnfD, RnfE and RnfG.</text>
</comment>
<comment type="subcellular location">
    <subcellularLocation>
        <location evidence="1">Cell inner membrane</location>
        <topology evidence="1">Multi-pass membrane protein</topology>
    </subcellularLocation>
</comment>
<comment type="similarity">
    <text evidence="1">Belongs to the NqrB/RnfD family.</text>
</comment>
<sequence length="350" mass="37750">MAFKLASSPHLKVQLQTQSVMRRVTLCALPGVAAQFYFFGWGVLVQVMLAITIALLSEAAVLKLRKRPIISTLSDNSAVLTALLIGVSIPSIAPWWVVVVGTIFAIVIVKHLYGGLGQNIFNPAMAAYVMLLISFPVQMTSWSVPLSLAQTPMDLSLTLNAIFGAMTPEKLSIYKYGIDGIAMATPLDTVKTDLSLGLTITESLSKTIFSDGFGVGWFWVNVAYLVGGLAMLKLKVIRWQISVGILAALFVCSSFGYLLSPDTHIGPLFQLFSGATMLAVFFIATDPVTAATSVRGRLLFGGLIGVLVYVIRTYGGYPDAFAFAILLANLCAPFIDYYIKPRSYGHRAGS</sequence>
<name>RNFD_SHEPW</name>
<dbReference type="EC" id="7.-.-.-" evidence="1"/>
<dbReference type="EMBL" id="CP000472">
    <property type="protein sequence ID" value="ACJ29112.1"/>
    <property type="molecule type" value="Genomic_DNA"/>
</dbReference>
<dbReference type="RefSeq" id="WP_020912472.1">
    <property type="nucleotide sequence ID" value="NC_011566.1"/>
</dbReference>
<dbReference type="SMR" id="B8CM55"/>
<dbReference type="STRING" id="225849.swp_2367"/>
<dbReference type="KEGG" id="swp:swp_2367"/>
<dbReference type="eggNOG" id="COG4658">
    <property type="taxonomic scope" value="Bacteria"/>
</dbReference>
<dbReference type="HOGENOM" id="CLU_042020_0_0_6"/>
<dbReference type="OrthoDB" id="9776359at2"/>
<dbReference type="Proteomes" id="UP000000753">
    <property type="component" value="Chromosome"/>
</dbReference>
<dbReference type="GO" id="GO:0005886">
    <property type="term" value="C:plasma membrane"/>
    <property type="evidence" value="ECO:0007669"/>
    <property type="project" value="UniProtKB-SubCell"/>
</dbReference>
<dbReference type="GO" id="GO:0022900">
    <property type="term" value="P:electron transport chain"/>
    <property type="evidence" value="ECO:0007669"/>
    <property type="project" value="UniProtKB-UniRule"/>
</dbReference>
<dbReference type="GO" id="GO:0055085">
    <property type="term" value="P:transmembrane transport"/>
    <property type="evidence" value="ECO:0007669"/>
    <property type="project" value="InterPro"/>
</dbReference>
<dbReference type="HAMAP" id="MF_00462">
    <property type="entry name" value="RsxD_RnfD"/>
    <property type="match status" value="1"/>
</dbReference>
<dbReference type="InterPro" id="IPR004338">
    <property type="entry name" value="NqrB/RnfD"/>
</dbReference>
<dbReference type="InterPro" id="IPR011303">
    <property type="entry name" value="RnfD_bac"/>
</dbReference>
<dbReference type="NCBIfam" id="NF002011">
    <property type="entry name" value="PRK00816.1"/>
    <property type="match status" value="1"/>
</dbReference>
<dbReference type="NCBIfam" id="TIGR01946">
    <property type="entry name" value="rnfD"/>
    <property type="match status" value="1"/>
</dbReference>
<dbReference type="PANTHER" id="PTHR30578">
    <property type="entry name" value="ELECTRON TRANSPORT COMPLEX PROTEIN RNFD"/>
    <property type="match status" value="1"/>
</dbReference>
<dbReference type="PANTHER" id="PTHR30578:SF0">
    <property type="entry name" value="ION-TRANSLOCATING OXIDOREDUCTASE COMPLEX SUBUNIT D"/>
    <property type="match status" value="1"/>
</dbReference>
<dbReference type="Pfam" id="PF03116">
    <property type="entry name" value="NQR2_RnfD_RnfE"/>
    <property type="match status" value="1"/>
</dbReference>
<organism>
    <name type="scientific">Shewanella piezotolerans (strain WP3 / JCM 13877)</name>
    <dbReference type="NCBI Taxonomy" id="225849"/>
    <lineage>
        <taxon>Bacteria</taxon>
        <taxon>Pseudomonadati</taxon>
        <taxon>Pseudomonadota</taxon>
        <taxon>Gammaproteobacteria</taxon>
        <taxon>Alteromonadales</taxon>
        <taxon>Shewanellaceae</taxon>
        <taxon>Shewanella</taxon>
    </lineage>
</organism>
<feature type="chain" id="PRO_1000125399" description="Ion-translocating oxidoreductase complex subunit D">
    <location>
        <begin position="1"/>
        <end position="350"/>
    </location>
</feature>
<feature type="transmembrane region" description="Helical" evidence="1">
    <location>
        <begin position="36"/>
        <end position="56"/>
    </location>
</feature>
<feature type="transmembrane region" description="Helical" evidence="1">
    <location>
        <begin position="68"/>
        <end position="88"/>
    </location>
</feature>
<feature type="transmembrane region" description="Helical" evidence="1">
    <location>
        <begin position="89"/>
        <end position="109"/>
    </location>
</feature>
<feature type="transmembrane region" description="Helical" evidence="1">
    <location>
        <begin position="120"/>
        <end position="140"/>
    </location>
</feature>
<feature type="transmembrane region" description="Helical" evidence="1">
    <location>
        <begin position="212"/>
        <end position="232"/>
    </location>
</feature>
<feature type="transmembrane region" description="Helical" evidence="1">
    <location>
        <begin position="239"/>
        <end position="259"/>
    </location>
</feature>
<feature type="transmembrane region" description="Helical" evidence="1">
    <location>
        <begin position="265"/>
        <end position="285"/>
    </location>
</feature>
<feature type="transmembrane region" description="Helical" evidence="1">
    <location>
        <begin position="291"/>
        <end position="311"/>
    </location>
</feature>
<feature type="transmembrane region" description="Helical" evidence="1">
    <location>
        <begin position="315"/>
        <end position="335"/>
    </location>
</feature>
<feature type="modified residue" description="FMN phosphoryl threonine" evidence="1">
    <location>
        <position position="185"/>
    </location>
</feature>
<accession>B8CM55</accession>
<evidence type="ECO:0000255" key="1">
    <source>
        <dbReference type="HAMAP-Rule" id="MF_00462"/>
    </source>
</evidence>
<protein>
    <recommendedName>
        <fullName evidence="1">Ion-translocating oxidoreductase complex subunit D</fullName>
        <ecNumber evidence="1">7.-.-.-</ecNumber>
    </recommendedName>
    <alternativeName>
        <fullName evidence="1">Rnf electron transport complex subunit D</fullName>
    </alternativeName>
</protein>
<gene>
    <name evidence="1" type="primary">rnfD</name>
    <name type="ordered locus">swp_2367</name>
</gene>
<reference key="1">
    <citation type="journal article" date="2008" name="PLoS ONE">
        <title>Environmental adaptation: genomic analysis of the piezotolerant and psychrotolerant deep-sea iron reducing bacterium Shewanella piezotolerans WP3.</title>
        <authorList>
            <person name="Wang F."/>
            <person name="Wang J."/>
            <person name="Jian H."/>
            <person name="Zhang B."/>
            <person name="Li S."/>
            <person name="Wang F."/>
            <person name="Zeng X."/>
            <person name="Gao L."/>
            <person name="Bartlett D.H."/>
            <person name="Yu J."/>
            <person name="Hu S."/>
            <person name="Xiao X."/>
        </authorList>
    </citation>
    <scope>NUCLEOTIDE SEQUENCE [LARGE SCALE GENOMIC DNA]</scope>
    <source>
        <strain>WP3 / JCM 13877</strain>
    </source>
</reference>
<keyword id="KW-0997">Cell inner membrane</keyword>
<keyword id="KW-1003">Cell membrane</keyword>
<keyword id="KW-0249">Electron transport</keyword>
<keyword id="KW-0285">Flavoprotein</keyword>
<keyword id="KW-0288">FMN</keyword>
<keyword id="KW-0472">Membrane</keyword>
<keyword id="KW-0597">Phosphoprotein</keyword>
<keyword id="KW-1278">Translocase</keyword>
<keyword id="KW-0812">Transmembrane</keyword>
<keyword id="KW-1133">Transmembrane helix</keyword>
<keyword id="KW-0813">Transport</keyword>
<proteinExistence type="inferred from homology"/>